<accession>Q04368</accession>
<accession>D6VZJ9</accession>
<reference key="1">
    <citation type="journal article" date="1997" name="Nature">
        <title>The nucleotide sequence of Saccharomyces cerevisiae chromosome XIII.</title>
        <authorList>
            <person name="Bowman S."/>
            <person name="Churcher C.M."/>
            <person name="Badcock K."/>
            <person name="Brown D."/>
            <person name="Chillingworth T."/>
            <person name="Connor R."/>
            <person name="Dedman K."/>
            <person name="Devlin K."/>
            <person name="Gentles S."/>
            <person name="Hamlin N."/>
            <person name="Hunt S."/>
            <person name="Jagels K."/>
            <person name="Lye G."/>
            <person name="Moule S."/>
            <person name="Odell C."/>
            <person name="Pearson D."/>
            <person name="Rajandream M.A."/>
            <person name="Rice P."/>
            <person name="Skelton J."/>
            <person name="Walsh S.V."/>
            <person name="Whitehead S."/>
            <person name="Barrell B.G."/>
        </authorList>
    </citation>
    <scope>NUCLEOTIDE SEQUENCE [LARGE SCALE GENOMIC DNA]</scope>
    <source>
        <strain>ATCC 204508 / S288c</strain>
    </source>
</reference>
<reference key="2">
    <citation type="journal article" date="2014" name="G3 (Bethesda)">
        <title>The reference genome sequence of Saccharomyces cerevisiae: Then and now.</title>
        <authorList>
            <person name="Engel S.R."/>
            <person name="Dietrich F.S."/>
            <person name="Fisk D.G."/>
            <person name="Binkley G."/>
            <person name="Balakrishnan R."/>
            <person name="Costanzo M.C."/>
            <person name="Dwight S.S."/>
            <person name="Hitz B.C."/>
            <person name="Karra K."/>
            <person name="Nash R.S."/>
            <person name="Weng S."/>
            <person name="Wong E.D."/>
            <person name="Lloyd P."/>
            <person name="Skrzypek M.S."/>
            <person name="Miyasato S.R."/>
            <person name="Simison M."/>
            <person name="Cherry J.M."/>
        </authorList>
    </citation>
    <scope>GENOME REANNOTATION</scope>
    <source>
        <strain>ATCC 204508 / S288c</strain>
    </source>
</reference>
<reference key="3">
    <citation type="journal article" date="2002" name="BMC Genet.">
        <title>Conservation of the COP9/signalosome in budding yeast.</title>
        <authorList>
            <person name="Wee S."/>
            <person name="Hetfeld B."/>
            <person name="Dubiel W."/>
            <person name="Wolf D.A."/>
        </authorList>
    </citation>
    <scope>FUNCTION OF THE COP9 SIGNALOSOME COMPLEX</scope>
</reference>
<reference key="4">
    <citation type="journal article" date="2002" name="EMBO Rep.">
        <title>COP9 signalosome components play a role in the mating pheromone response of S. cerevisiae.</title>
        <authorList>
            <person name="Maytal-Kivity V."/>
            <person name="Piran R."/>
            <person name="Pick E."/>
            <person name="Hofmann K."/>
            <person name="Glickman M.H."/>
        </authorList>
    </citation>
    <scope>INTERACTION WITH CSN9 AND CSN12</scope>
    <scope>IDENTIFICATION IN THE COP9 SIGNALOSOME COMPLEX</scope>
    <scope>FUNCTION OF THE COP9 SIGNALOSOME COMPLEX</scope>
</reference>
<reference key="5">
    <citation type="journal article" date="2002" name="Nature">
        <title>Functional organization of the yeast proteome by systematic analysis of protein complexes.</title>
        <authorList>
            <person name="Gavin A.-C."/>
            <person name="Boesche M."/>
            <person name="Krause R."/>
            <person name="Grandi P."/>
            <person name="Marzioch M."/>
            <person name="Bauer A."/>
            <person name="Schultz J."/>
            <person name="Rick J.M."/>
            <person name="Michon A.-M."/>
            <person name="Cruciat C.-M."/>
            <person name="Remor M."/>
            <person name="Hoefert C."/>
            <person name="Schelder M."/>
            <person name="Brajenovic M."/>
            <person name="Ruffner H."/>
            <person name="Merino A."/>
            <person name="Klein K."/>
            <person name="Hudak M."/>
            <person name="Dickson D."/>
            <person name="Rudi T."/>
            <person name="Gnau V."/>
            <person name="Bauch A."/>
            <person name="Bastuck S."/>
            <person name="Huhse B."/>
            <person name="Leutwein C."/>
            <person name="Heurtier M.-A."/>
            <person name="Copley R.R."/>
            <person name="Edelmann A."/>
            <person name="Querfurth E."/>
            <person name="Rybin V."/>
            <person name="Drewes G."/>
            <person name="Raida M."/>
            <person name="Bouwmeester T."/>
            <person name="Bork P."/>
            <person name="Seraphin B."/>
            <person name="Kuster B."/>
            <person name="Neubauer G."/>
            <person name="Superti-Furga G."/>
        </authorList>
    </citation>
    <scope>INTERACTION WITH RRI1/CSN5</scope>
    <scope>IDENTIFICATION BY MASS SPECTROMETRY</scope>
</reference>
<reference key="6">
    <citation type="journal article" date="2003" name="Int. J. Biochem. Cell Biol.">
        <title>The COP9 signalosome-like complex in S. cerevisiae and links to other PCI complexes.</title>
        <authorList>
            <person name="Maytal-Kivity V."/>
            <person name="Pick E."/>
            <person name="Piran R."/>
            <person name="Hofmann K."/>
            <person name="Glickman M.H."/>
        </authorList>
    </citation>
    <scope>INTERACTION WITH CSN9; CSN12 AND RPN5</scope>
    <scope>IDENTIFICATION IN THE COP9 SIGNALOSOME COMPLEX</scope>
</reference>
<dbReference type="EMBL" id="Z49211">
    <property type="protein sequence ID" value="CAA89128.1"/>
    <property type="molecule type" value="Genomic_DNA"/>
</dbReference>
<dbReference type="EMBL" id="BK006946">
    <property type="protein sequence ID" value="DAA09923.1"/>
    <property type="molecule type" value="Genomic_DNA"/>
</dbReference>
<dbReference type="PIR" id="S54027">
    <property type="entry name" value="S54027"/>
</dbReference>
<dbReference type="RefSeq" id="NP_013738.1">
    <property type="nucleotide sequence ID" value="NM_001182521.1"/>
</dbReference>
<dbReference type="BioGRID" id="35197">
    <property type="interactions" value="153"/>
</dbReference>
<dbReference type="ComplexPortal" id="CPX-1894">
    <property type="entry name" value="COP9 signalosome complex"/>
</dbReference>
<dbReference type="DIP" id="DIP-1810N"/>
<dbReference type="FunCoup" id="Q04368">
    <property type="interactions" value="79"/>
</dbReference>
<dbReference type="IntAct" id="Q04368">
    <property type="interactions" value="8"/>
</dbReference>
<dbReference type="MINT" id="Q04368"/>
<dbReference type="STRING" id="4932.YMR025W"/>
<dbReference type="PaxDb" id="4932-YMR025W"/>
<dbReference type="PeptideAtlas" id="Q04368"/>
<dbReference type="EnsemblFungi" id="YMR025W_mRNA">
    <property type="protein sequence ID" value="YMR025W"/>
    <property type="gene ID" value="YMR025W"/>
</dbReference>
<dbReference type="GeneID" id="855040"/>
<dbReference type="KEGG" id="sce:YMR025W"/>
<dbReference type="AGR" id="SGD:S000004627"/>
<dbReference type="SGD" id="S000004627">
    <property type="gene designation" value="CSI1"/>
</dbReference>
<dbReference type="VEuPathDB" id="FungiDB:YMR025W"/>
<dbReference type="HOGENOM" id="CLU_082192_0_0_1"/>
<dbReference type="InParanoid" id="Q04368"/>
<dbReference type="OMA" id="GYKIENS"/>
<dbReference type="OrthoDB" id="4033014at2759"/>
<dbReference type="BioCyc" id="YEAST:G3O-32730-MONOMER"/>
<dbReference type="BioGRID-ORCS" id="855040">
    <property type="hits" value="0 hits in 10 CRISPR screens"/>
</dbReference>
<dbReference type="PRO" id="PR:Q04368"/>
<dbReference type="Proteomes" id="UP000002311">
    <property type="component" value="Chromosome XIII"/>
</dbReference>
<dbReference type="RNAct" id="Q04368">
    <property type="molecule type" value="protein"/>
</dbReference>
<dbReference type="GO" id="GO:0008180">
    <property type="term" value="C:COP9 signalosome"/>
    <property type="evidence" value="ECO:0000314"/>
    <property type="project" value="SGD"/>
</dbReference>
<dbReference type="GO" id="GO:0005737">
    <property type="term" value="C:cytoplasm"/>
    <property type="evidence" value="ECO:0007669"/>
    <property type="project" value="UniProtKB-SubCell"/>
</dbReference>
<dbReference type="GO" id="GO:0005634">
    <property type="term" value="C:nucleus"/>
    <property type="evidence" value="ECO:0000303"/>
    <property type="project" value="ComplexPortal"/>
</dbReference>
<dbReference type="GO" id="GO:0000754">
    <property type="term" value="P:adaptation of signaling pathway by response to pheromone involved in conjugation with cellular fusion"/>
    <property type="evidence" value="ECO:0000303"/>
    <property type="project" value="ComplexPortal"/>
</dbReference>
<dbReference type="GO" id="GO:0071444">
    <property type="term" value="P:cellular response to pheromone"/>
    <property type="evidence" value="ECO:0000315"/>
    <property type="project" value="SGD"/>
</dbReference>
<dbReference type="GO" id="GO:0000747">
    <property type="term" value="P:conjugation with cellular fusion"/>
    <property type="evidence" value="ECO:0000315"/>
    <property type="project" value="SGD"/>
</dbReference>
<dbReference type="GO" id="GO:0000338">
    <property type="term" value="P:protein deneddylation"/>
    <property type="evidence" value="ECO:0000315"/>
    <property type="project" value="SGD"/>
</dbReference>
<dbReference type="GO" id="GO:2000434">
    <property type="term" value="P:regulation of protein neddylation"/>
    <property type="evidence" value="ECO:0000303"/>
    <property type="project" value="ComplexPortal"/>
</dbReference>
<comment type="function">
    <text evidence="2 3">Component of the COP9 signalosome (CSN) complex that acts as an regulator of the ubiquitin (Ubl) conjugation pathway by mediating the deneddylation of the cullin subunit of SCF-type E3 ubiquitin-protein ligase complexes The CSN complex is involved in the regulation of the mating pheromone response.</text>
</comment>
<comment type="subunit">
    <text evidence="1 3 4">Component of a COP9 signalosome-like (CSN) complex, composed of RRI1/CSN5, CSN9, RRI2/CSN10, PCI8/CSN11, CSN12 and CSI1. In the complex, it probably interacts directly with CSN9 and CSN12. Interacts also with RPN5.</text>
</comment>
<comment type="interaction">
    <interactant intactId="EBI-28044">
        <id>Q04368</id>
    </interactant>
    <interactant intactId="EBI-33535">
        <id>Q03981</id>
        <label>CSN9</label>
    </interactant>
    <organismsDiffer>false</organismsDiffer>
    <experiments>6</experiments>
</comment>
<comment type="interaction">
    <interactant intactId="EBI-28044">
        <id>Q04368</id>
    </interactant>
    <interactant intactId="EBI-37511">
        <id>Q12468</id>
        <label>RRI1</label>
    </interactant>
    <organismsDiffer>false</organismsDiffer>
    <experiments>3</experiments>
</comment>
<comment type="subcellular location">
    <subcellularLocation>
        <location evidence="5">Cytoplasm</location>
    </subcellularLocation>
    <subcellularLocation>
        <location evidence="5">Nucleus</location>
    </subcellularLocation>
</comment>
<name>CSI1_YEAST</name>
<proteinExistence type="evidence at protein level"/>
<feature type="chain" id="PRO_0000079398" description="Cop9 signalosome-interactor 1">
    <location>
        <begin position="1"/>
        <end position="295"/>
    </location>
</feature>
<organism>
    <name type="scientific">Saccharomyces cerevisiae (strain ATCC 204508 / S288c)</name>
    <name type="common">Baker's yeast</name>
    <dbReference type="NCBI Taxonomy" id="559292"/>
    <lineage>
        <taxon>Eukaryota</taxon>
        <taxon>Fungi</taxon>
        <taxon>Dikarya</taxon>
        <taxon>Ascomycota</taxon>
        <taxon>Saccharomycotina</taxon>
        <taxon>Saccharomycetes</taxon>
        <taxon>Saccharomycetales</taxon>
        <taxon>Saccharomycetaceae</taxon>
        <taxon>Saccharomyces</taxon>
    </lineage>
</organism>
<sequence>MDLLKFSSLAISEINFLHESSFDSIDHSWFLLIGCKLDQDDEIYIPINGNEAESQWYIEKVIRIPMQENDKINQERLERRINLTKVTQKDICILGILDLCQLEEDENITNKVTEKVLTQLTALALKYLIKYNVFRQHTSFQEAVNSLKGYKIENSVQIGAEIILDFLQDKVQIKDVNDRYQIPTPNNTVDPGFDEFQLIDMKDKEINIQKYNNNTIRKLLEKINRMIIFLKNYDATDKPFSSTQDVILRKISMLVTQLQRGGTSDMNYLLDNKINEIKLLEISCKQWEISNMLKK</sequence>
<protein>
    <recommendedName>
        <fullName>Cop9 signalosome-interactor 1</fullName>
    </recommendedName>
</protein>
<gene>
    <name type="primary">CSI1</name>
    <name type="ordered locus">YMR025W</name>
    <name type="ORF">YM9711.15</name>
</gene>
<evidence type="ECO:0000269" key="1">
    <source>
    </source>
</evidence>
<evidence type="ECO:0000269" key="2">
    <source>
    </source>
</evidence>
<evidence type="ECO:0000269" key="3">
    <source>
    </source>
</evidence>
<evidence type="ECO:0000269" key="4">
    <source>
    </source>
</evidence>
<evidence type="ECO:0000305" key="5"/>
<keyword id="KW-0963">Cytoplasm</keyword>
<keyword id="KW-0539">Nucleus</keyword>
<keyword id="KW-1185">Reference proteome</keyword>
<keyword id="KW-0736">Signalosome</keyword>